<name>OXA1L_ARATH</name>
<feature type="transit peptide" description="Mitochondrion" evidence="2">
    <location>
        <begin position="1"/>
        <end position="22"/>
    </location>
</feature>
<feature type="chain" id="PRO_0000020364" description="Mitochondrial inner membrane protein OXA1-like">
    <location>
        <begin position="23"/>
        <end position="431"/>
    </location>
</feature>
<feature type="transmembrane region" description="Helical" evidence="2">
    <location>
        <begin position="119"/>
        <end position="139"/>
    </location>
</feature>
<feature type="transmembrane region" description="Helical" evidence="2">
    <location>
        <begin position="155"/>
        <end position="175"/>
    </location>
</feature>
<feature type="transmembrane region" description="Helical" evidence="2">
    <location>
        <begin position="227"/>
        <end position="247"/>
    </location>
</feature>
<feature type="transmembrane region" description="Helical" evidence="2">
    <location>
        <begin position="269"/>
        <end position="289"/>
    </location>
</feature>
<feature type="transmembrane region" description="Helical" evidence="2">
    <location>
        <begin position="312"/>
        <end position="332"/>
    </location>
</feature>
<feature type="region of interest" description="Disordered" evidence="3">
    <location>
        <begin position="362"/>
        <end position="414"/>
    </location>
</feature>
<feature type="compositionally biased region" description="Low complexity" evidence="3">
    <location>
        <begin position="392"/>
        <end position="402"/>
    </location>
</feature>
<accession>Q9SKD3</accession>
<organism>
    <name type="scientific">Arabidopsis thaliana</name>
    <name type="common">Mouse-ear cress</name>
    <dbReference type="NCBI Taxonomy" id="3702"/>
    <lineage>
        <taxon>Eukaryota</taxon>
        <taxon>Viridiplantae</taxon>
        <taxon>Streptophyta</taxon>
        <taxon>Embryophyta</taxon>
        <taxon>Tracheophyta</taxon>
        <taxon>Spermatophyta</taxon>
        <taxon>Magnoliopsida</taxon>
        <taxon>eudicotyledons</taxon>
        <taxon>Gunneridae</taxon>
        <taxon>Pentapetalae</taxon>
        <taxon>rosids</taxon>
        <taxon>malvids</taxon>
        <taxon>Brassicales</taxon>
        <taxon>Brassicaceae</taxon>
        <taxon>Camelineae</taxon>
        <taxon>Arabidopsis</taxon>
    </lineage>
</organism>
<gene>
    <name type="primary">OXA1L</name>
    <name type="ordered locus">At2g46470</name>
    <name type="ORF">F11C10.16</name>
</gene>
<dbReference type="EMBL" id="AC006526">
    <property type="protein sequence ID" value="AAD23047.1"/>
    <property type="molecule type" value="Genomic_DNA"/>
</dbReference>
<dbReference type="EMBL" id="CP002685">
    <property type="protein sequence ID" value="AEC10702.1"/>
    <property type="molecule type" value="Genomic_DNA"/>
</dbReference>
<dbReference type="EMBL" id="AK117811">
    <property type="protein sequence ID" value="BAC42453.1"/>
    <property type="molecule type" value="mRNA"/>
</dbReference>
<dbReference type="EMBL" id="AY080748">
    <property type="protein sequence ID" value="AAL85994.1"/>
    <property type="molecule type" value="mRNA"/>
</dbReference>
<dbReference type="EMBL" id="BT000993">
    <property type="protein sequence ID" value="AAN41393.1"/>
    <property type="molecule type" value="mRNA"/>
</dbReference>
<dbReference type="PIR" id="C84903">
    <property type="entry name" value="C84903"/>
</dbReference>
<dbReference type="RefSeq" id="NP_182170.1">
    <property type="nucleotide sequence ID" value="NM_130211.5"/>
</dbReference>
<dbReference type="SMR" id="Q9SKD3"/>
<dbReference type="FunCoup" id="Q9SKD3">
    <property type="interactions" value="4134"/>
</dbReference>
<dbReference type="STRING" id="3702.Q9SKD3"/>
<dbReference type="PaxDb" id="3702-AT2G46470.1"/>
<dbReference type="ProteomicsDB" id="248679"/>
<dbReference type="EnsemblPlants" id="AT2G46470.1">
    <property type="protein sequence ID" value="AT2G46470.1"/>
    <property type="gene ID" value="AT2G46470"/>
</dbReference>
<dbReference type="GeneID" id="819256"/>
<dbReference type="Gramene" id="AT2G46470.1">
    <property type="protein sequence ID" value="AT2G46470.1"/>
    <property type="gene ID" value="AT2G46470"/>
</dbReference>
<dbReference type="KEGG" id="ath:AT2G46470"/>
<dbReference type="Araport" id="AT2G46470"/>
<dbReference type="TAIR" id="AT2G46470">
    <property type="gene designation" value="OXA1L"/>
</dbReference>
<dbReference type="eggNOG" id="KOG1239">
    <property type="taxonomic scope" value="Eukaryota"/>
</dbReference>
<dbReference type="HOGENOM" id="CLU_029282_4_0_1"/>
<dbReference type="InParanoid" id="Q9SKD3"/>
<dbReference type="OMA" id="FSRGNRH"/>
<dbReference type="PhylomeDB" id="Q9SKD3"/>
<dbReference type="CD-CODE" id="4299E36E">
    <property type="entry name" value="Nucleolus"/>
</dbReference>
<dbReference type="PRO" id="PR:Q9SKD3"/>
<dbReference type="Proteomes" id="UP000006548">
    <property type="component" value="Chromosome 2"/>
</dbReference>
<dbReference type="ExpressionAtlas" id="Q9SKD3">
    <property type="expression patterns" value="baseline and differential"/>
</dbReference>
<dbReference type="GO" id="GO:0005743">
    <property type="term" value="C:mitochondrial inner membrane"/>
    <property type="evidence" value="ECO:0007669"/>
    <property type="project" value="UniProtKB-SubCell"/>
</dbReference>
<dbReference type="GO" id="GO:0032977">
    <property type="term" value="F:membrane insertase activity"/>
    <property type="evidence" value="ECO:0007669"/>
    <property type="project" value="InterPro"/>
</dbReference>
<dbReference type="CDD" id="cd20069">
    <property type="entry name" value="5TM_Oxa1-like"/>
    <property type="match status" value="1"/>
</dbReference>
<dbReference type="InterPro" id="IPR001708">
    <property type="entry name" value="YidC/ALB3/OXA1/COX18"/>
</dbReference>
<dbReference type="InterPro" id="IPR028055">
    <property type="entry name" value="YidC/Oxa/ALB_C"/>
</dbReference>
<dbReference type="NCBIfam" id="TIGR03592">
    <property type="entry name" value="yidC_oxa1_cterm"/>
    <property type="match status" value="1"/>
</dbReference>
<dbReference type="PANTHER" id="PTHR12428:SF34">
    <property type="entry name" value="MITOCHONDRIAL INNER MEMBRANE PROTEIN OXA1-LIKE"/>
    <property type="match status" value="1"/>
</dbReference>
<dbReference type="PANTHER" id="PTHR12428">
    <property type="entry name" value="OXA1"/>
    <property type="match status" value="1"/>
</dbReference>
<dbReference type="Pfam" id="PF02096">
    <property type="entry name" value="60KD_IMP"/>
    <property type="match status" value="1"/>
</dbReference>
<evidence type="ECO:0000250" key="1"/>
<evidence type="ECO:0000255" key="2"/>
<evidence type="ECO:0000256" key="3">
    <source>
        <dbReference type="SAM" id="MobiDB-lite"/>
    </source>
</evidence>
<evidence type="ECO:0000305" key="4"/>
<proteinExistence type="evidence at transcript level"/>
<keyword id="KW-0472">Membrane</keyword>
<keyword id="KW-0496">Mitochondrion</keyword>
<keyword id="KW-0999">Mitochondrion inner membrane</keyword>
<keyword id="KW-1185">Reference proteome</keyword>
<keyword id="KW-0809">Transit peptide</keyword>
<keyword id="KW-0812">Transmembrane</keyword>
<keyword id="KW-1133">Transmembrane helix</keyword>
<comment type="function">
    <text evidence="1">Probably required for the insertion of integral membrane proteins into the mitochondrial inner membrane. May participate in the activity and assembly of cytochrome oxidase (By similarity).</text>
</comment>
<comment type="subcellular location">
    <subcellularLocation>
        <location evidence="1">Mitochondrion inner membrane</location>
        <topology evidence="1">Multi-pass membrane protein</topology>
    </subcellularLocation>
</comment>
<comment type="similarity">
    <text evidence="4">Belongs to the OXA1/ALB3/YidC (TC 2.A.9.2) family.</text>
</comment>
<protein>
    <recommendedName>
        <fullName>Mitochondrial inner membrane protein OXA1-like</fullName>
    </recommendedName>
</protein>
<sequence>MATCLRGITKRVNLLQRRVYPSCGHLIRDDRDETKSGSSDTMIREVLARNGTNKLSSMFADRHYQSFATGPLGLGLSSCRHMSSTPPEWSDKVDGIDFVATEVVPDEIIEAVTTTSQAVVPAINEVAIAAADSAFPVAALQHLIDAVHSFTGLNWWASIALTTVLIRGVTIPILLNQLKATYKLNVLRPQLEELRQEMSTKAQDPEAMAEGQRRMQLLFKEHGVTPFTPLKGLIIQGPIFISFFFAIRNMAEKVPSFKTGGTLWFTDLTTTDTTYILPLLTAVTFLIMVESNMQEGLEGNPVAGTMKKFSRIIAFLSIPVLIGIEKALFCYWLTSNLFTLVYGLTLRRPDVRKLLNLPDVVNSSTRQPSPSSPLPFSFAEPKDQSVVAQEKPPMSSESSSSVPDRRISRSSVLNQRIRTLERQLKDRKIKK</sequence>
<reference key="1">
    <citation type="journal article" date="1999" name="Nature">
        <title>Sequence and analysis of chromosome 2 of the plant Arabidopsis thaliana.</title>
        <authorList>
            <person name="Lin X."/>
            <person name="Kaul S."/>
            <person name="Rounsley S.D."/>
            <person name="Shea T.P."/>
            <person name="Benito M.-I."/>
            <person name="Town C.D."/>
            <person name="Fujii C.Y."/>
            <person name="Mason T.M."/>
            <person name="Bowman C.L."/>
            <person name="Barnstead M.E."/>
            <person name="Feldblyum T.V."/>
            <person name="Buell C.R."/>
            <person name="Ketchum K.A."/>
            <person name="Lee J.J."/>
            <person name="Ronning C.M."/>
            <person name="Koo H.L."/>
            <person name="Moffat K.S."/>
            <person name="Cronin L.A."/>
            <person name="Shen M."/>
            <person name="Pai G."/>
            <person name="Van Aken S."/>
            <person name="Umayam L."/>
            <person name="Tallon L.J."/>
            <person name="Gill J.E."/>
            <person name="Adams M.D."/>
            <person name="Carrera A.J."/>
            <person name="Creasy T.H."/>
            <person name="Goodman H.M."/>
            <person name="Somerville C.R."/>
            <person name="Copenhaver G.P."/>
            <person name="Preuss D."/>
            <person name="Nierman W.C."/>
            <person name="White O."/>
            <person name="Eisen J.A."/>
            <person name="Salzberg S.L."/>
            <person name="Fraser C.M."/>
            <person name="Venter J.C."/>
        </authorList>
    </citation>
    <scope>NUCLEOTIDE SEQUENCE [LARGE SCALE GENOMIC DNA]</scope>
    <source>
        <strain>cv. Columbia</strain>
    </source>
</reference>
<reference key="2">
    <citation type="journal article" date="2017" name="Plant J.">
        <title>Araport11: a complete reannotation of the Arabidopsis thaliana reference genome.</title>
        <authorList>
            <person name="Cheng C.Y."/>
            <person name="Krishnakumar V."/>
            <person name="Chan A.P."/>
            <person name="Thibaud-Nissen F."/>
            <person name="Schobel S."/>
            <person name="Town C.D."/>
        </authorList>
    </citation>
    <scope>GENOME REANNOTATION</scope>
    <source>
        <strain>cv. Columbia</strain>
    </source>
</reference>
<reference key="3">
    <citation type="journal article" date="2002" name="Science">
        <title>Functional annotation of a full-length Arabidopsis cDNA collection.</title>
        <authorList>
            <person name="Seki M."/>
            <person name="Narusaka M."/>
            <person name="Kamiya A."/>
            <person name="Ishida J."/>
            <person name="Satou M."/>
            <person name="Sakurai T."/>
            <person name="Nakajima M."/>
            <person name="Enju A."/>
            <person name="Akiyama K."/>
            <person name="Oono Y."/>
            <person name="Muramatsu M."/>
            <person name="Hayashizaki Y."/>
            <person name="Kawai J."/>
            <person name="Carninci P."/>
            <person name="Itoh M."/>
            <person name="Ishii Y."/>
            <person name="Arakawa T."/>
            <person name="Shibata K."/>
            <person name="Shinagawa A."/>
            <person name="Shinozaki K."/>
        </authorList>
    </citation>
    <scope>NUCLEOTIDE SEQUENCE [LARGE SCALE MRNA]</scope>
    <source>
        <strain>cv. Columbia</strain>
    </source>
</reference>
<reference key="4">
    <citation type="journal article" date="2003" name="Science">
        <title>Empirical analysis of transcriptional activity in the Arabidopsis genome.</title>
        <authorList>
            <person name="Yamada K."/>
            <person name="Lim J."/>
            <person name="Dale J.M."/>
            <person name="Chen H."/>
            <person name="Shinn P."/>
            <person name="Palm C.J."/>
            <person name="Southwick A.M."/>
            <person name="Wu H.C."/>
            <person name="Kim C.J."/>
            <person name="Nguyen M."/>
            <person name="Pham P.K."/>
            <person name="Cheuk R.F."/>
            <person name="Karlin-Newmann G."/>
            <person name="Liu S.X."/>
            <person name="Lam B."/>
            <person name="Sakano H."/>
            <person name="Wu T."/>
            <person name="Yu G."/>
            <person name="Miranda M."/>
            <person name="Quach H.L."/>
            <person name="Tripp M."/>
            <person name="Chang C.H."/>
            <person name="Lee J.M."/>
            <person name="Toriumi M.J."/>
            <person name="Chan M.M."/>
            <person name="Tang C.C."/>
            <person name="Onodera C.S."/>
            <person name="Deng J.M."/>
            <person name="Akiyama K."/>
            <person name="Ansari Y."/>
            <person name="Arakawa T."/>
            <person name="Banh J."/>
            <person name="Banno F."/>
            <person name="Bowser L."/>
            <person name="Brooks S.Y."/>
            <person name="Carninci P."/>
            <person name="Chao Q."/>
            <person name="Choy N."/>
            <person name="Enju A."/>
            <person name="Goldsmith A.D."/>
            <person name="Gurjal M."/>
            <person name="Hansen N.F."/>
            <person name="Hayashizaki Y."/>
            <person name="Johnson-Hopson C."/>
            <person name="Hsuan V.W."/>
            <person name="Iida K."/>
            <person name="Karnes M."/>
            <person name="Khan S."/>
            <person name="Koesema E."/>
            <person name="Ishida J."/>
            <person name="Jiang P.X."/>
            <person name="Jones T."/>
            <person name="Kawai J."/>
            <person name="Kamiya A."/>
            <person name="Meyers C."/>
            <person name="Nakajima M."/>
            <person name="Narusaka M."/>
            <person name="Seki M."/>
            <person name="Sakurai T."/>
            <person name="Satou M."/>
            <person name="Tamse R."/>
            <person name="Vaysberg M."/>
            <person name="Wallender E.K."/>
            <person name="Wong C."/>
            <person name="Yamamura Y."/>
            <person name="Yuan S."/>
            <person name="Shinozaki K."/>
            <person name="Davis R.W."/>
            <person name="Theologis A."/>
            <person name="Ecker J.R."/>
        </authorList>
    </citation>
    <scope>NUCLEOTIDE SEQUENCE [LARGE SCALE MRNA]</scope>
    <source>
        <strain>cv. Columbia</strain>
    </source>
</reference>
<reference key="5">
    <citation type="journal article" date="2000" name="Plant Cell Physiol.">
        <title>Mitochondrial localization of AtOXA1, an Arabidopsis homologue of yeast Oxa1p involved in the insertion and assembly of protein complexes in mitochondrial inner membrane.</title>
        <authorList>
            <person name="Sakamoto W."/>
            <person name="Spielewoy N."/>
            <person name="Bonnard G."/>
            <person name="Murata M."/>
            <person name="Wintz H."/>
        </authorList>
    </citation>
    <scope>IDENTIFICATION</scope>
    <source>
        <strain>cv. Columbia</strain>
    </source>
</reference>